<name>SCPA_STRPS</name>
<reference key="1">
    <citation type="journal article" date="2009" name="BMC Genomics">
        <title>Genome evolution driven by host adaptations results in a more virulent and antimicrobial-resistant Streptococcus pneumoniae serotype 14.</title>
        <authorList>
            <person name="Ding F."/>
            <person name="Tang P."/>
            <person name="Hsu M.-H."/>
            <person name="Cui P."/>
            <person name="Hu S."/>
            <person name="Yu J."/>
            <person name="Chiu C.-H."/>
        </authorList>
    </citation>
    <scope>NUCLEOTIDE SEQUENCE [LARGE SCALE GENOMIC DNA]</scope>
    <source>
        <strain>CGSP14</strain>
    </source>
</reference>
<protein>
    <recommendedName>
        <fullName evidence="1">Segregation and condensation protein A</fullName>
    </recommendedName>
</protein>
<keyword id="KW-0131">Cell cycle</keyword>
<keyword id="KW-0132">Cell division</keyword>
<keyword id="KW-0159">Chromosome partition</keyword>
<keyword id="KW-0963">Cytoplasm</keyword>
<accession>B2ISX4</accession>
<comment type="function">
    <text evidence="1">Participates in chromosomal partition during cell division. May act via the formation of a condensin-like complex containing Smc and ScpB that pull DNA away from mid-cell into both cell halves.</text>
</comment>
<comment type="subunit">
    <text evidence="1">Component of a cohesin-like complex composed of ScpA, ScpB and the Smc homodimer, in which ScpA and ScpB bind to the head domain of Smc. The presence of the three proteins is required for the association of the complex with DNA.</text>
</comment>
<comment type="subcellular location">
    <subcellularLocation>
        <location evidence="1">Cytoplasm</location>
    </subcellularLocation>
    <text evidence="1">Associated with two foci at the outer edges of the nucleoid region in young cells, and at four foci within both cell halves in older cells.</text>
</comment>
<comment type="similarity">
    <text evidence="1">Belongs to the ScpA family.</text>
</comment>
<feature type="chain" id="PRO_1000215948" description="Segregation and condensation protein A">
    <location>
        <begin position="1"/>
        <end position="242"/>
    </location>
</feature>
<sequence>MDIKLKDFEGPLDLLLHLVSKYQMDIYDVPITEVIEQYLAYVSTLQAMRLEVTGEYMVMASQLMLIKSRKLLPKVAEVTDLGDDLEQDLLSQIEEYRKFKLLGEHLEAKHQERAQYYSKAPTELIYEDAELVHDKTTIDLFLTFSNILAKKKEEFAQNHTTILRDEYKIEDMMIIVKESLIGRDQLRLQDLFKEAQNVQEVITLFLATLELIKTQELILVQEESFGDIYLMEKKEESQVPQS</sequence>
<dbReference type="EMBL" id="CP001033">
    <property type="protein sequence ID" value="ACB91101.1"/>
    <property type="molecule type" value="Genomic_DNA"/>
</dbReference>
<dbReference type="RefSeq" id="WP_000351912.1">
    <property type="nucleotide sequence ID" value="NC_010582.1"/>
</dbReference>
<dbReference type="SMR" id="B2ISX4"/>
<dbReference type="KEGG" id="spw:SPCG_1849"/>
<dbReference type="HOGENOM" id="CLU_038686_3_3_9"/>
<dbReference type="GO" id="GO:0005737">
    <property type="term" value="C:cytoplasm"/>
    <property type="evidence" value="ECO:0007669"/>
    <property type="project" value="UniProtKB-SubCell"/>
</dbReference>
<dbReference type="GO" id="GO:0051301">
    <property type="term" value="P:cell division"/>
    <property type="evidence" value="ECO:0007669"/>
    <property type="project" value="UniProtKB-KW"/>
</dbReference>
<dbReference type="GO" id="GO:0007059">
    <property type="term" value="P:chromosome segregation"/>
    <property type="evidence" value="ECO:0007669"/>
    <property type="project" value="UniProtKB-UniRule"/>
</dbReference>
<dbReference type="GO" id="GO:0006260">
    <property type="term" value="P:DNA replication"/>
    <property type="evidence" value="ECO:0007669"/>
    <property type="project" value="UniProtKB-UniRule"/>
</dbReference>
<dbReference type="Gene3D" id="6.10.250.2410">
    <property type="match status" value="1"/>
</dbReference>
<dbReference type="Gene3D" id="1.10.10.580">
    <property type="entry name" value="Structural maintenance of chromosome 1. Chain E"/>
    <property type="match status" value="1"/>
</dbReference>
<dbReference type="HAMAP" id="MF_01805">
    <property type="entry name" value="ScpA"/>
    <property type="match status" value="1"/>
</dbReference>
<dbReference type="InterPro" id="IPR003768">
    <property type="entry name" value="ScpA"/>
</dbReference>
<dbReference type="InterPro" id="IPR023093">
    <property type="entry name" value="ScpA-like_C"/>
</dbReference>
<dbReference type="NCBIfam" id="NF000993">
    <property type="entry name" value="PRK00104.1-2"/>
    <property type="match status" value="1"/>
</dbReference>
<dbReference type="PANTHER" id="PTHR33969">
    <property type="entry name" value="SEGREGATION AND CONDENSATION PROTEIN A"/>
    <property type="match status" value="1"/>
</dbReference>
<dbReference type="PANTHER" id="PTHR33969:SF2">
    <property type="entry name" value="SEGREGATION AND CONDENSATION PROTEIN A"/>
    <property type="match status" value="1"/>
</dbReference>
<dbReference type="Pfam" id="PF02616">
    <property type="entry name" value="SMC_ScpA"/>
    <property type="match status" value="1"/>
</dbReference>
<proteinExistence type="inferred from homology"/>
<organism>
    <name type="scientific">Streptococcus pneumoniae (strain CGSP14)</name>
    <dbReference type="NCBI Taxonomy" id="516950"/>
    <lineage>
        <taxon>Bacteria</taxon>
        <taxon>Bacillati</taxon>
        <taxon>Bacillota</taxon>
        <taxon>Bacilli</taxon>
        <taxon>Lactobacillales</taxon>
        <taxon>Streptococcaceae</taxon>
        <taxon>Streptococcus</taxon>
    </lineage>
</organism>
<gene>
    <name evidence="1" type="primary">scpA</name>
    <name type="ordered locus">SPCG_1849</name>
</gene>
<evidence type="ECO:0000255" key="1">
    <source>
        <dbReference type="HAMAP-Rule" id="MF_01805"/>
    </source>
</evidence>